<protein>
    <recommendedName>
        <fullName>Mediator of RNA polymerase II transcription subunit 14</fullName>
    </recommendedName>
    <alternativeName>
        <fullName>Mediator complex subunit 14</fullName>
    </alternativeName>
</protein>
<evidence type="ECO:0000250" key="1"/>
<evidence type="ECO:0000256" key="2">
    <source>
        <dbReference type="SAM" id="MobiDB-lite"/>
    </source>
</evidence>
<evidence type="ECO:0000305" key="3"/>
<accession>Q0CL23</accession>
<name>MED14_ASPTN</name>
<reference key="1">
    <citation type="submission" date="2005-09" db="EMBL/GenBank/DDBJ databases">
        <title>Annotation of the Aspergillus terreus NIH2624 genome.</title>
        <authorList>
            <person name="Birren B.W."/>
            <person name="Lander E.S."/>
            <person name="Galagan J.E."/>
            <person name="Nusbaum C."/>
            <person name="Devon K."/>
            <person name="Henn M."/>
            <person name="Ma L.-J."/>
            <person name="Jaffe D.B."/>
            <person name="Butler J."/>
            <person name="Alvarez P."/>
            <person name="Gnerre S."/>
            <person name="Grabherr M."/>
            <person name="Kleber M."/>
            <person name="Mauceli E.W."/>
            <person name="Brockman W."/>
            <person name="Rounsley S."/>
            <person name="Young S.K."/>
            <person name="LaButti K."/>
            <person name="Pushparaj V."/>
            <person name="DeCaprio D."/>
            <person name="Crawford M."/>
            <person name="Koehrsen M."/>
            <person name="Engels R."/>
            <person name="Montgomery P."/>
            <person name="Pearson M."/>
            <person name="Howarth C."/>
            <person name="Larson L."/>
            <person name="Luoma S."/>
            <person name="White J."/>
            <person name="Alvarado L."/>
            <person name="Kodira C.D."/>
            <person name="Zeng Q."/>
            <person name="Oleary S."/>
            <person name="Yandava C."/>
            <person name="Denning D.W."/>
            <person name="Nierman W.C."/>
            <person name="Milne T."/>
            <person name="Madden K."/>
        </authorList>
    </citation>
    <scope>NUCLEOTIDE SEQUENCE [LARGE SCALE GENOMIC DNA]</scope>
    <source>
        <strain>NIH 2624 / FGSC A1156</strain>
    </source>
</reference>
<sequence>MPGVIMDEPNVGGHPKGPSVPDSSRNGIPPLSGSDGAHGVSSAHNDGANRLNGSAKGIDGYKQNVDSSTTKIDFVGLRQPPELPHITQGFFPFSKLVNRSVQQCWNELSELITELAEVQVPPQDSGPLPGAPNGKPLGNQSEQNLQKKLRLLDFAHSKRAEFIKLLVLSQWSRQAADVSRLIDIQNFIRIRHQAYAGALQCIGDMKRDLVQAQVGNPDLKTALEVLAKGKVVSMPTLGYKPPRPLTAKGALKRLQKINRLISARLVLSDSVPTPFQTYRVHDGRVTFIVPDEFELDLSIGAEDETSQFYFVDIRFLFTPSSPIPKGRIFNELDMRINDTLRTKGLAGCFDLLHGLVLTTKINALFKQAAELARGLWSDTLRVELLHRTLVLQYWTLRPGPKSWLEIGIKSGRRSSENSINGLPSIGLRWIRDGQEVDSRDIEFDSKNLSMECILRSVIALHTSHILSSAFEKLSKHSLFSTGALSLRGRLSRTEPGACQLDVQLTRSRHLRVSVEPMSGTSILSTTPSTLERSDVDRNTDKPFADEIVSRVARLRCISAIEEVESNAKLLGFQVVNPRSLKLDFRRHFPANILRFSFFWHRSWERNWVLAATSSMDGDSWWVVQLQPAVPSESALPFDANSGISAPRSAQIVCNTFFPAPQHNMKSPFADMGHSLYGILTMQANARYLADLQSISFHPPLPQLVIEASLQVPDILIHYQALKLPRAFQVAMPAELARRSFIKDTIRLAFSGVDPHEKAAVLVAYGELLSPPNDVGALVSKQDRSLVLHHGGNKFAIRLLTAAGRSAMCELLESLQRLECALSILETLRRKKMQPQSLSLSRVGFLYGPRAELSANIDINLTTSSTHTIIDPLHLVTQEKPLFQLRLGIAFDYPNPHRRMQGSFTSLLNNAGATSSLGTVTGLLSVTLPLMQALDGLMANPSHKDPLRVQVIARNAKTFQIHYPMQKVRFQLLITQRPNSLVWVLREAGGLQGRSSEDQLKSRLKERLYHSKGDGWQGLENGVVATIDKVGNLLTELDKCFSGLDDIPILNQSPLETKPIPSKPTMGNTEPAASGNTVQNARLENKSPQKAAATHSNADVITID</sequence>
<comment type="function">
    <text evidence="1">Component of the Mediator complex, a coactivator involved in the regulated transcription of nearly all RNA polymerase II-dependent genes. Mediator functions as a bridge to convey information from gene-specific regulatory proteins to the basal RNA polymerase II transcription machinery. Mediator is recruited to promoters by direct interactions with regulatory proteins and serves as a scaffold for the assembly of a functional preinitiation complex with RNA polymerase II and the general transcription factors (By similarity).</text>
</comment>
<comment type="subunit">
    <text evidence="1">Component of the Mediator complex.</text>
</comment>
<comment type="subcellular location">
    <subcellularLocation>
        <location evidence="3">Nucleus</location>
    </subcellularLocation>
</comment>
<comment type="similarity">
    <text evidence="3">Belongs to the Mediator complex subunit 14 family.</text>
</comment>
<comment type="sequence caution" evidence="3">
    <conflict type="erroneous initiation">
        <sequence resource="EMBL-CDS" id="EAU34680"/>
    </conflict>
</comment>
<keyword id="KW-0010">Activator</keyword>
<keyword id="KW-0539">Nucleus</keyword>
<keyword id="KW-1185">Reference proteome</keyword>
<keyword id="KW-0804">Transcription</keyword>
<keyword id="KW-0805">Transcription regulation</keyword>
<gene>
    <name type="primary">rgr1</name>
    <name type="synonym">med14</name>
    <name type="ORF">ATEG_05611</name>
</gene>
<organism>
    <name type="scientific">Aspergillus terreus (strain NIH 2624 / FGSC A1156)</name>
    <dbReference type="NCBI Taxonomy" id="341663"/>
    <lineage>
        <taxon>Eukaryota</taxon>
        <taxon>Fungi</taxon>
        <taxon>Dikarya</taxon>
        <taxon>Ascomycota</taxon>
        <taxon>Pezizomycotina</taxon>
        <taxon>Eurotiomycetes</taxon>
        <taxon>Eurotiomycetidae</taxon>
        <taxon>Eurotiales</taxon>
        <taxon>Aspergillaceae</taxon>
        <taxon>Aspergillus</taxon>
        <taxon>Aspergillus subgen. Circumdati</taxon>
    </lineage>
</organism>
<feature type="chain" id="PRO_0000304596" description="Mediator of RNA polymerase II transcription subunit 14">
    <location>
        <begin position="1"/>
        <end position="1103"/>
    </location>
</feature>
<feature type="region of interest" description="Disordered" evidence="2">
    <location>
        <begin position="1"/>
        <end position="63"/>
    </location>
</feature>
<feature type="region of interest" description="Disordered" evidence="2">
    <location>
        <begin position="120"/>
        <end position="140"/>
    </location>
</feature>
<feature type="region of interest" description="Disordered" evidence="2">
    <location>
        <begin position="1054"/>
        <end position="1103"/>
    </location>
</feature>
<feature type="compositionally biased region" description="Polar residues" evidence="2">
    <location>
        <begin position="1073"/>
        <end position="1103"/>
    </location>
</feature>
<proteinExistence type="inferred from homology"/>
<dbReference type="EMBL" id="CH476600">
    <property type="protein sequence ID" value="EAU34680.1"/>
    <property type="status" value="ALT_INIT"/>
    <property type="molecule type" value="Genomic_DNA"/>
</dbReference>
<dbReference type="RefSeq" id="XP_001214789.1">
    <property type="nucleotide sequence ID" value="XM_001214789.1"/>
</dbReference>
<dbReference type="STRING" id="341663.Q0CL23"/>
<dbReference type="EnsemblFungi" id="EAU34680">
    <property type="protein sequence ID" value="EAU34680"/>
    <property type="gene ID" value="ATEG_05611"/>
</dbReference>
<dbReference type="GeneID" id="4320791"/>
<dbReference type="eggNOG" id="KOG1875">
    <property type="taxonomic scope" value="Eukaryota"/>
</dbReference>
<dbReference type="OrthoDB" id="205099at2759"/>
<dbReference type="Proteomes" id="UP000007963">
    <property type="component" value="Unassembled WGS sequence"/>
</dbReference>
<dbReference type="GO" id="GO:0070847">
    <property type="term" value="C:core mediator complex"/>
    <property type="evidence" value="ECO:0007669"/>
    <property type="project" value="TreeGrafter"/>
</dbReference>
<dbReference type="GO" id="GO:0016592">
    <property type="term" value="C:mediator complex"/>
    <property type="evidence" value="ECO:0007669"/>
    <property type="project" value="InterPro"/>
</dbReference>
<dbReference type="GO" id="GO:0003712">
    <property type="term" value="F:transcription coregulator activity"/>
    <property type="evidence" value="ECO:0007669"/>
    <property type="project" value="InterPro"/>
</dbReference>
<dbReference type="GO" id="GO:0006357">
    <property type="term" value="P:regulation of transcription by RNA polymerase II"/>
    <property type="evidence" value="ECO:0007669"/>
    <property type="project" value="InterPro"/>
</dbReference>
<dbReference type="InterPro" id="IPR055122">
    <property type="entry name" value="Med14_N"/>
</dbReference>
<dbReference type="InterPro" id="IPR013947">
    <property type="entry name" value="Mediator_Med14"/>
</dbReference>
<dbReference type="PANTHER" id="PTHR12809">
    <property type="entry name" value="MEDIATOR COMPLEX SUBUNIT"/>
    <property type="match status" value="1"/>
</dbReference>
<dbReference type="PANTHER" id="PTHR12809:SF2">
    <property type="entry name" value="MEDIATOR OF RNA POLYMERASE II TRANSCRIPTION SUBUNIT 14"/>
    <property type="match status" value="1"/>
</dbReference>
<dbReference type="Pfam" id="PF08638">
    <property type="entry name" value="Med14"/>
    <property type="match status" value="1"/>
</dbReference>